<evidence type="ECO:0000255" key="1">
    <source>
        <dbReference type="HAMAP-Rule" id="MF_00036"/>
    </source>
</evidence>
<evidence type="ECO:0000256" key="2">
    <source>
        <dbReference type="SAM" id="MobiDB-lite"/>
    </source>
</evidence>
<name>SYA_META3</name>
<protein>
    <recommendedName>
        <fullName evidence="1">Alanine--tRNA ligase</fullName>
        <ecNumber evidence="1">6.1.1.7</ecNumber>
    </recommendedName>
    <alternativeName>
        <fullName evidence="1">Alanyl-tRNA synthetase</fullName>
        <shortName evidence="1">AlaRS</shortName>
    </alternativeName>
</protein>
<feature type="chain" id="PRO_1000074505" description="Alanine--tRNA ligase">
    <location>
        <begin position="1"/>
        <end position="910"/>
    </location>
</feature>
<feature type="region of interest" description="Disordered" evidence="2">
    <location>
        <begin position="488"/>
        <end position="507"/>
    </location>
</feature>
<feature type="compositionally biased region" description="Basic and acidic residues" evidence="2">
    <location>
        <begin position="488"/>
        <end position="505"/>
    </location>
</feature>
<feature type="binding site" evidence="1">
    <location>
        <position position="614"/>
    </location>
    <ligand>
        <name>Zn(2+)</name>
        <dbReference type="ChEBI" id="CHEBI:29105"/>
    </ligand>
</feature>
<feature type="binding site" evidence="1">
    <location>
        <position position="618"/>
    </location>
    <ligand>
        <name>Zn(2+)</name>
        <dbReference type="ChEBI" id="CHEBI:29105"/>
    </ligand>
</feature>
<feature type="binding site" evidence="1">
    <location>
        <position position="718"/>
    </location>
    <ligand>
        <name>Zn(2+)</name>
        <dbReference type="ChEBI" id="CHEBI:29105"/>
    </ligand>
</feature>
<feature type="binding site" evidence="1">
    <location>
        <position position="722"/>
    </location>
    <ligand>
        <name>Zn(2+)</name>
        <dbReference type="ChEBI" id="CHEBI:29105"/>
    </ligand>
</feature>
<proteinExistence type="inferred from homology"/>
<keyword id="KW-0030">Aminoacyl-tRNA synthetase</keyword>
<keyword id="KW-0067">ATP-binding</keyword>
<keyword id="KW-0963">Cytoplasm</keyword>
<keyword id="KW-0436">Ligase</keyword>
<keyword id="KW-0479">Metal-binding</keyword>
<keyword id="KW-0547">Nucleotide-binding</keyword>
<keyword id="KW-0648">Protein biosynthesis</keyword>
<keyword id="KW-0694">RNA-binding</keyword>
<keyword id="KW-0820">tRNA-binding</keyword>
<keyword id="KW-0862">Zinc</keyword>
<dbReference type="EC" id="6.1.1.7" evidence="1"/>
<dbReference type="EMBL" id="CP000743">
    <property type="protein sequence ID" value="ABR56205.1"/>
    <property type="molecule type" value="Genomic_DNA"/>
</dbReference>
<dbReference type="RefSeq" id="WP_011973337.1">
    <property type="nucleotide sequence ID" value="NC_009635.1"/>
</dbReference>
<dbReference type="SMR" id="A6UUN3"/>
<dbReference type="STRING" id="419665.Maeo_0621"/>
<dbReference type="GeneID" id="5327332"/>
<dbReference type="KEGG" id="mae:Maeo_0621"/>
<dbReference type="eggNOG" id="arCOG01255">
    <property type="taxonomic scope" value="Archaea"/>
</dbReference>
<dbReference type="HOGENOM" id="CLU_004485_4_0_2"/>
<dbReference type="OrthoDB" id="7506at2157"/>
<dbReference type="Proteomes" id="UP000001106">
    <property type="component" value="Chromosome"/>
</dbReference>
<dbReference type="GO" id="GO:0005737">
    <property type="term" value="C:cytoplasm"/>
    <property type="evidence" value="ECO:0007669"/>
    <property type="project" value="UniProtKB-SubCell"/>
</dbReference>
<dbReference type="GO" id="GO:0004813">
    <property type="term" value="F:alanine-tRNA ligase activity"/>
    <property type="evidence" value="ECO:0007669"/>
    <property type="project" value="UniProtKB-UniRule"/>
</dbReference>
<dbReference type="GO" id="GO:0002161">
    <property type="term" value="F:aminoacyl-tRNA deacylase activity"/>
    <property type="evidence" value="ECO:0007669"/>
    <property type="project" value="TreeGrafter"/>
</dbReference>
<dbReference type="GO" id="GO:0005524">
    <property type="term" value="F:ATP binding"/>
    <property type="evidence" value="ECO:0007669"/>
    <property type="project" value="UniProtKB-UniRule"/>
</dbReference>
<dbReference type="GO" id="GO:0000049">
    <property type="term" value="F:tRNA binding"/>
    <property type="evidence" value="ECO:0007669"/>
    <property type="project" value="UniProtKB-KW"/>
</dbReference>
<dbReference type="GO" id="GO:0008270">
    <property type="term" value="F:zinc ion binding"/>
    <property type="evidence" value="ECO:0007669"/>
    <property type="project" value="UniProtKB-UniRule"/>
</dbReference>
<dbReference type="GO" id="GO:0006419">
    <property type="term" value="P:alanyl-tRNA aminoacylation"/>
    <property type="evidence" value="ECO:0007669"/>
    <property type="project" value="UniProtKB-UniRule"/>
</dbReference>
<dbReference type="CDD" id="cd00673">
    <property type="entry name" value="AlaRS_core"/>
    <property type="match status" value="1"/>
</dbReference>
<dbReference type="FunFam" id="3.30.54.20:FF:000004">
    <property type="entry name" value="Alanine--tRNA ligase"/>
    <property type="match status" value="1"/>
</dbReference>
<dbReference type="FunFam" id="3.30.930.10:FF:000056">
    <property type="entry name" value="Alanine--tRNA ligase"/>
    <property type="match status" value="1"/>
</dbReference>
<dbReference type="FunFam" id="3.30.980.10:FF:000004">
    <property type="entry name" value="Alanine--tRNA ligase, cytoplasmic"/>
    <property type="match status" value="1"/>
</dbReference>
<dbReference type="Gene3D" id="2.40.30.130">
    <property type="match status" value="1"/>
</dbReference>
<dbReference type="Gene3D" id="3.10.310.40">
    <property type="match status" value="1"/>
</dbReference>
<dbReference type="Gene3D" id="3.30.54.20">
    <property type="match status" value="1"/>
</dbReference>
<dbReference type="Gene3D" id="6.10.250.550">
    <property type="match status" value="1"/>
</dbReference>
<dbReference type="Gene3D" id="3.30.930.10">
    <property type="entry name" value="Bira Bifunctional Protein, Domain 2"/>
    <property type="match status" value="1"/>
</dbReference>
<dbReference type="Gene3D" id="3.30.980.10">
    <property type="entry name" value="Threonyl-trna Synthetase, Chain A, domain 2"/>
    <property type="match status" value="1"/>
</dbReference>
<dbReference type="HAMAP" id="MF_00036_A">
    <property type="entry name" value="Ala_tRNA_synth_A"/>
    <property type="match status" value="1"/>
</dbReference>
<dbReference type="InterPro" id="IPR045864">
    <property type="entry name" value="aa-tRNA-synth_II/BPL/LPL"/>
</dbReference>
<dbReference type="InterPro" id="IPR002318">
    <property type="entry name" value="Ala-tRNA-lgiase_IIc"/>
</dbReference>
<dbReference type="InterPro" id="IPR018162">
    <property type="entry name" value="Ala-tRNA-ligase_IIc_anticod-bd"/>
</dbReference>
<dbReference type="InterPro" id="IPR018165">
    <property type="entry name" value="Ala-tRNA-synth_IIc_core"/>
</dbReference>
<dbReference type="InterPro" id="IPR018164">
    <property type="entry name" value="Ala-tRNA-synth_IIc_N"/>
</dbReference>
<dbReference type="InterPro" id="IPR022429">
    <property type="entry name" value="Ala-tRNA_lgiase_arc"/>
</dbReference>
<dbReference type="InterPro" id="IPR050058">
    <property type="entry name" value="Ala-tRNA_ligase"/>
</dbReference>
<dbReference type="InterPro" id="IPR003156">
    <property type="entry name" value="DHHA1_dom"/>
</dbReference>
<dbReference type="InterPro" id="IPR018163">
    <property type="entry name" value="Thr/Ala-tRNA-synth_IIc_edit"/>
</dbReference>
<dbReference type="InterPro" id="IPR009000">
    <property type="entry name" value="Transl_B-barrel_sf"/>
</dbReference>
<dbReference type="InterPro" id="IPR012947">
    <property type="entry name" value="tRNA_SAD"/>
</dbReference>
<dbReference type="NCBIfam" id="TIGR03683">
    <property type="entry name" value="A-tRNA_syn_arch"/>
    <property type="match status" value="1"/>
</dbReference>
<dbReference type="NCBIfam" id="TIGR00344">
    <property type="entry name" value="alaS"/>
    <property type="match status" value="1"/>
</dbReference>
<dbReference type="PANTHER" id="PTHR11777:SF9">
    <property type="entry name" value="ALANINE--TRNA LIGASE, CYTOPLASMIC"/>
    <property type="match status" value="1"/>
</dbReference>
<dbReference type="PANTHER" id="PTHR11777">
    <property type="entry name" value="ALANYL-TRNA SYNTHETASE"/>
    <property type="match status" value="1"/>
</dbReference>
<dbReference type="Pfam" id="PF02272">
    <property type="entry name" value="DHHA1"/>
    <property type="match status" value="1"/>
</dbReference>
<dbReference type="Pfam" id="PF01411">
    <property type="entry name" value="tRNA-synt_2c"/>
    <property type="match status" value="1"/>
</dbReference>
<dbReference type="Pfam" id="PF07973">
    <property type="entry name" value="tRNA_SAD"/>
    <property type="match status" value="1"/>
</dbReference>
<dbReference type="PRINTS" id="PR00980">
    <property type="entry name" value="TRNASYNTHALA"/>
</dbReference>
<dbReference type="SMART" id="SM00863">
    <property type="entry name" value="tRNA_SAD"/>
    <property type="match status" value="1"/>
</dbReference>
<dbReference type="SUPFAM" id="SSF55681">
    <property type="entry name" value="Class II aaRS and biotin synthetases"/>
    <property type="match status" value="1"/>
</dbReference>
<dbReference type="SUPFAM" id="SSF101353">
    <property type="entry name" value="Putative anticodon-binding domain of alanyl-tRNA synthetase (AlaRS)"/>
    <property type="match status" value="1"/>
</dbReference>
<dbReference type="SUPFAM" id="SSF55186">
    <property type="entry name" value="ThrRS/AlaRS common domain"/>
    <property type="match status" value="1"/>
</dbReference>
<dbReference type="SUPFAM" id="SSF50447">
    <property type="entry name" value="Translation proteins"/>
    <property type="match status" value="1"/>
</dbReference>
<dbReference type="PROSITE" id="PS50860">
    <property type="entry name" value="AA_TRNA_LIGASE_II_ALA"/>
    <property type="match status" value="1"/>
</dbReference>
<comment type="function">
    <text evidence="1">Catalyzes the attachment of alanine to tRNA(Ala) in a two-step reaction: alanine is first activated by ATP to form Ala-AMP and then transferred to the acceptor end of tRNA(Ala). Also edits incorrectly charged Ser-tRNA(Ala) and Gly-tRNA(Ala) via its editing domain.</text>
</comment>
<comment type="catalytic activity">
    <reaction evidence="1">
        <text>tRNA(Ala) + L-alanine + ATP = L-alanyl-tRNA(Ala) + AMP + diphosphate</text>
        <dbReference type="Rhea" id="RHEA:12540"/>
        <dbReference type="Rhea" id="RHEA-COMP:9657"/>
        <dbReference type="Rhea" id="RHEA-COMP:9923"/>
        <dbReference type="ChEBI" id="CHEBI:30616"/>
        <dbReference type="ChEBI" id="CHEBI:33019"/>
        <dbReference type="ChEBI" id="CHEBI:57972"/>
        <dbReference type="ChEBI" id="CHEBI:78442"/>
        <dbReference type="ChEBI" id="CHEBI:78497"/>
        <dbReference type="ChEBI" id="CHEBI:456215"/>
        <dbReference type="EC" id="6.1.1.7"/>
    </reaction>
</comment>
<comment type="cofactor">
    <cofactor evidence="1">
        <name>Zn(2+)</name>
        <dbReference type="ChEBI" id="CHEBI:29105"/>
    </cofactor>
    <text evidence="1">Binds 1 zinc ion per subunit.</text>
</comment>
<comment type="subcellular location">
    <subcellularLocation>
        <location evidence="1">Cytoplasm</location>
    </subcellularLocation>
</comment>
<comment type="domain">
    <text evidence="1">Consists of three domains; the N-terminal catalytic domain, the editing domain and the C-terminal C-Ala domain. The editing domain removes incorrectly charged amino acids, while the C-Ala domain, along with tRNA(Ala), serves as a bridge to cooperatively bring together the editing and aminoacylation centers thus stimulating deacylation of misacylated tRNAs.</text>
</comment>
<comment type="similarity">
    <text evidence="1">Belongs to the class-II aminoacyl-tRNA synthetase family.</text>
</comment>
<gene>
    <name evidence="1" type="primary">alaS</name>
    <name type="ordered locus">Maeo_0621</name>
</gene>
<sequence length="910" mass="102722">MEIKHDYNVQLFKEKGFIRKQCKECNQYFWTLDPKRETCGDSPCDEYSFIGSSITNKEYTYNEMVKEFLNFFDKNGHTPIKRYPVSARRWRDDILLTIASIAVFQPWVTKGIVKPVANPLVIAQPCIRLNDIDNVGRTGRHMTCFTMGGHHAFNTDEDFKYWTDRTVELCYNFFTNLGIDGSSITFIESWWEGGGNAGPCYEVITHGVELATLVFMQYEKTEQGDYIEMPLKIVDTGYGLERFVWASKGTPTVYEAVFGDIIGKLMDDANINMNDIGPKILAESATLAGLMDIENVGDLRILRQKVAEKLNLDVNELDSILSPIENIYAIADHTRCLAFMLGDGIVPSNVKDGYLARLLVRKTLRYIKNVGLSLSLKDIVAMQLENLKEIYPELMDMKEYIMDVLEEEENKYIQTITKGKGAVERIAKSKDEITLDDLIELYDSKGLPPEVVRDIVEEINKKGSKNNKGNKTIKITVPDNFYTIVAERHEEKKEDSKSEKGENTAEKSTISINLDDIPETELLFYSNPYQKEVEAKILKIIGNVVILDKTVFYPEGGGQKYDIGLIGNKKIISVQKNNNGIVCHTVENTDGLNEEDTIIAKLNWENRLNLMRNHTATHIINAAASKVLGKHIWQTGSNVESNKARLDITHYKRITREEIKEIEKIANQIVLDAIPVKSTVMGRNEAEQKYGFKIYQGGVVPGNILRILDIEGVDVEACGGTHCQNTSEVGYIKILKTERIQDGVERLEYTSGINSVNEVSLMEDILLNASSIVGVPCENLPKTVNRFFEEWKEQKKIIEELHKKIGELEKGNLNDKFEKVGKYDLLVEKVEGAPKELMSIADNLVNEKDNSIVILLNNSGYILCKCGEKVEIKMGELLRKIAKGGGKDKMAQGKCADDIETLKSKVVGEL</sequence>
<reference key="1">
    <citation type="submission" date="2007-06" db="EMBL/GenBank/DDBJ databases">
        <title>Complete sequence of Methanococcus aeolicus Nankai-3.</title>
        <authorList>
            <consortium name="US DOE Joint Genome Institute"/>
            <person name="Copeland A."/>
            <person name="Lucas S."/>
            <person name="Lapidus A."/>
            <person name="Barry K."/>
            <person name="Glavina del Rio T."/>
            <person name="Dalin E."/>
            <person name="Tice H."/>
            <person name="Pitluck S."/>
            <person name="Chain P."/>
            <person name="Malfatti S."/>
            <person name="Shin M."/>
            <person name="Vergez L."/>
            <person name="Schmutz J."/>
            <person name="Larimer F."/>
            <person name="Land M."/>
            <person name="Hauser L."/>
            <person name="Kyrpides N."/>
            <person name="Lykidis A."/>
            <person name="Sieprawska-Lupa M."/>
            <person name="Whitman W.B."/>
            <person name="Richardson P."/>
        </authorList>
    </citation>
    <scope>NUCLEOTIDE SEQUENCE [LARGE SCALE GENOMIC DNA]</scope>
    <source>
        <strain>ATCC BAA-1280 / DSM 17508 / OCM 812 / Nankai-3</strain>
    </source>
</reference>
<accession>A6UUN3</accession>
<organism>
    <name type="scientific">Methanococcus aeolicus (strain ATCC BAA-1280 / DSM 17508 / OCM 812 / Nankai-3)</name>
    <dbReference type="NCBI Taxonomy" id="419665"/>
    <lineage>
        <taxon>Archaea</taxon>
        <taxon>Methanobacteriati</taxon>
        <taxon>Methanobacteriota</taxon>
        <taxon>Methanomada group</taxon>
        <taxon>Methanococci</taxon>
        <taxon>Methanococcales</taxon>
        <taxon>Methanococcaceae</taxon>
        <taxon>Methanococcus</taxon>
    </lineage>
</organism>